<dbReference type="EC" id="3.6.1.1" evidence="1"/>
<dbReference type="EMBL" id="CP000922">
    <property type="protein sequence ID" value="ACJ34894.1"/>
    <property type="molecule type" value="Genomic_DNA"/>
</dbReference>
<dbReference type="RefSeq" id="WP_012576033.1">
    <property type="nucleotide sequence ID" value="NC_011567.1"/>
</dbReference>
<dbReference type="SMR" id="B7GL49"/>
<dbReference type="STRING" id="491915.Aflv_2539"/>
<dbReference type="GeneID" id="7038813"/>
<dbReference type="KEGG" id="afl:Aflv_2539"/>
<dbReference type="PATRIC" id="fig|491915.6.peg.2616"/>
<dbReference type="eggNOG" id="COG0546">
    <property type="taxonomic scope" value="Bacteria"/>
</dbReference>
<dbReference type="HOGENOM" id="CLU_045011_19_3_9"/>
<dbReference type="Proteomes" id="UP000000742">
    <property type="component" value="Chromosome"/>
</dbReference>
<dbReference type="GO" id="GO:0005829">
    <property type="term" value="C:cytosol"/>
    <property type="evidence" value="ECO:0007669"/>
    <property type="project" value="TreeGrafter"/>
</dbReference>
<dbReference type="GO" id="GO:0004427">
    <property type="term" value="F:inorganic diphosphate phosphatase activity"/>
    <property type="evidence" value="ECO:0007669"/>
    <property type="project" value="UniProtKB-UniRule"/>
</dbReference>
<dbReference type="GO" id="GO:0000287">
    <property type="term" value="F:magnesium ion binding"/>
    <property type="evidence" value="ECO:0007669"/>
    <property type="project" value="UniProtKB-UniRule"/>
</dbReference>
<dbReference type="GO" id="GO:0008967">
    <property type="term" value="F:phosphoglycolate phosphatase activity"/>
    <property type="evidence" value="ECO:0007669"/>
    <property type="project" value="TreeGrafter"/>
</dbReference>
<dbReference type="GO" id="GO:0006281">
    <property type="term" value="P:DNA repair"/>
    <property type="evidence" value="ECO:0007669"/>
    <property type="project" value="TreeGrafter"/>
</dbReference>
<dbReference type="CDD" id="cd02616">
    <property type="entry name" value="HAD_PPase"/>
    <property type="match status" value="1"/>
</dbReference>
<dbReference type="FunFam" id="3.40.50.1000:FF:000022">
    <property type="entry name" value="Phosphoglycolate phosphatase"/>
    <property type="match status" value="1"/>
</dbReference>
<dbReference type="Gene3D" id="3.40.50.1000">
    <property type="entry name" value="HAD superfamily/HAD-like"/>
    <property type="match status" value="1"/>
</dbReference>
<dbReference type="Gene3D" id="1.10.150.240">
    <property type="entry name" value="Putative phosphatase, domain 2"/>
    <property type="match status" value="1"/>
</dbReference>
<dbReference type="HAMAP" id="MF_01250">
    <property type="entry name" value="Pyrophosphat_PpaX"/>
    <property type="match status" value="1"/>
</dbReference>
<dbReference type="InterPro" id="IPR050155">
    <property type="entry name" value="HAD-like_hydrolase_sf"/>
</dbReference>
<dbReference type="InterPro" id="IPR036412">
    <property type="entry name" value="HAD-like_sf"/>
</dbReference>
<dbReference type="InterPro" id="IPR006439">
    <property type="entry name" value="HAD-SF_hydro_IA"/>
</dbReference>
<dbReference type="InterPro" id="IPR041492">
    <property type="entry name" value="HAD_2"/>
</dbReference>
<dbReference type="InterPro" id="IPR023214">
    <property type="entry name" value="HAD_sf"/>
</dbReference>
<dbReference type="InterPro" id="IPR023198">
    <property type="entry name" value="PGP-like_dom2"/>
</dbReference>
<dbReference type="InterPro" id="IPR023733">
    <property type="entry name" value="Pyrophosphatase_Ppax"/>
</dbReference>
<dbReference type="NCBIfam" id="TIGR01549">
    <property type="entry name" value="HAD-SF-IA-v1"/>
    <property type="match status" value="1"/>
</dbReference>
<dbReference type="NCBIfam" id="TIGR01509">
    <property type="entry name" value="HAD-SF-IA-v3"/>
    <property type="match status" value="1"/>
</dbReference>
<dbReference type="NCBIfam" id="NF009804">
    <property type="entry name" value="PRK13288.1"/>
    <property type="match status" value="1"/>
</dbReference>
<dbReference type="PANTHER" id="PTHR43434">
    <property type="entry name" value="PHOSPHOGLYCOLATE PHOSPHATASE"/>
    <property type="match status" value="1"/>
</dbReference>
<dbReference type="PANTHER" id="PTHR43434:SF26">
    <property type="entry name" value="PYROPHOSPHATASE PPAX"/>
    <property type="match status" value="1"/>
</dbReference>
<dbReference type="Pfam" id="PF13419">
    <property type="entry name" value="HAD_2"/>
    <property type="match status" value="1"/>
</dbReference>
<dbReference type="SFLD" id="SFLDG01135">
    <property type="entry name" value="C1.5.6:_HAD__Beta-PGM__Phospha"/>
    <property type="match status" value="1"/>
</dbReference>
<dbReference type="SFLD" id="SFLDG01129">
    <property type="entry name" value="C1.5:_HAD__Beta-PGM__Phosphata"/>
    <property type="match status" value="1"/>
</dbReference>
<dbReference type="SUPFAM" id="SSF56784">
    <property type="entry name" value="HAD-like"/>
    <property type="match status" value="1"/>
</dbReference>
<evidence type="ECO:0000255" key="1">
    <source>
        <dbReference type="HAMAP-Rule" id="MF_01250"/>
    </source>
</evidence>
<proteinExistence type="inferred from homology"/>
<reference key="1">
    <citation type="journal article" date="2008" name="Genome Biol.">
        <title>Encapsulated in silica: genome, proteome and physiology of the thermophilic bacterium Anoxybacillus flavithermus WK1.</title>
        <authorList>
            <person name="Saw J.H."/>
            <person name="Mountain B.W."/>
            <person name="Feng L."/>
            <person name="Omelchenko M.V."/>
            <person name="Hou S."/>
            <person name="Saito J.A."/>
            <person name="Stott M.B."/>
            <person name="Li D."/>
            <person name="Zhao G."/>
            <person name="Wu J."/>
            <person name="Galperin M.Y."/>
            <person name="Koonin E.V."/>
            <person name="Makarova K.S."/>
            <person name="Wolf Y.I."/>
            <person name="Rigden D.J."/>
            <person name="Dunfield P.F."/>
            <person name="Wang L."/>
            <person name="Alam M."/>
        </authorList>
    </citation>
    <scope>NUCLEOTIDE SEQUENCE [LARGE SCALE GENOMIC DNA]</scope>
    <source>
        <strain>DSM 21510 / WK1</strain>
    </source>
</reference>
<protein>
    <recommendedName>
        <fullName evidence="1">Pyrophosphatase PpaX</fullName>
        <ecNumber evidence="1">3.6.1.1</ecNumber>
    </recommendedName>
</protein>
<keyword id="KW-0378">Hydrolase</keyword>
<keyword id="KW-0460">Magnesium</keyword>
<comment type="function">
    <text evidence="1">Hydrolyzes pyrophosphate formed during P-Ser-HPr dephosphorylation by HPrK/P. Might play a role in controlling the intracellular pyrophosphate pool.</text>
</comment>
<comment type="catalytic activity">
    <reaction evidence="1">
        <text>diphosphate + H2O = 2 phosphate + H(+)</text>
        <dbReference type="Rhea" id="RHEA:24576"/>
        <dbReference type="ChEBI" id="CHEBI:15377"/>
        <dbReference type="ChEBI" id="CHEBI:15378"/>
        <dbReference type="ChEBI" id="CHEBI:33019"/>
        <dbReference type="ChEBI" id="CHEBI:43474"/>
        <dbReference type="EC" id="3.6.1.1"/>
    </reaction>
</comment>
<comment type="cofactor">
    <cofactor evidence="1">
        <name>Mg(2+)</name>
        <dbReference type="ChEBI" id="CHEBI:18420"/>
    </cofactor>
</comment>
<comment type="similarity">
    <text evidence="1">Belongs to the HAD-like hydrolase superfamily. PpaX family.</text>
</comment>
<sequence length="215" mass="24441">MNINTILFDLDGTLINTNDLIIESFLHTLNHYYPNQYTREDVLAFIGPPLRDTFEAIDPERVDEMIETYRAFNHAHHDALVKEYETVYDTVQTLHEKGFKLGIVTTKIRHTVNMGLKLTKLDSFFKCVITLDDVEHAKPHPEPIEKALACLQAKPEETLMVGDNHHDILAGKHAGTKTAGVAWTIKGREHLATYEPDFMLEKMSDLLSILGVTSR</sequence>
<organism>
    <name type="scientific">Anoxybacillus flavithermus (strain DSM 21510 / WK1)</name>
    <dbReference type="NCBI Taxonomy" id="491915"/>
    <lineage>
        <taxon>Bacteria</taxon>
        <taxon>Bacillati</taxon>
        <taxon>Bacillota</taxon>
        <taxon>Bacilli</taxon>
        <taxon>Bacillales</taxon>
        <taxon>Anoxybacillaceae</taxon>
        <taxon>Anoxybacillus</taxon>
    </lineage>
</organism>
<accession>B7GL49</accession>
<gene>
    <name evidence="1" type="primary">ppaX</name>
    <name type="ordered locus">Aflv_2539</name>
</gene>
<name>PPAX_ANOFW</name>
<feature type="chain" id="PRO_1000139922" description="Pyrophosphatase PpaX">
    <location>
        <begin position="1"/>
        <end position="215"/>
    </location>
</feature>
<feature type="active site" description="Nucleophile" evidence="1">
    <location>
        <position position="9"/>
    </location>
</feature>